<evidence type="ECO:0000250" key="1"/>
<evidence type="ECO:0000255" key="2"/>
<evidence type="ECO:0000255" key="3">
    <source>
        <dbReference type="PROSITE-ProRule" id="PRU01230"/>
    </source>
</evidence>
<evidence type="ECO:0000269" key="4">
    <source>
    </source>
</evidence>
<evidence type="ECO:0000269" key="5">
    <source>
    </source>
</evidence>
<evidence type="ECO:0000305" key="6"/>
<proteinExistence type="evidence at transcript level"/>
<feature type="initiator methionine" description="Removed" evidence="2">
    <location>
        <position position="1"/>
    </location>
</feature>
<feature type="chain" id="PRO_0000312528" description="Guanine nucleotide-binding protein alpha-9 subunit">
    <location>
        <begin position="2"/>
        <end position="342"/>
    </location>
</feature>
<feature type="domain" description="G-alpha" evidence="3">
    <location>
        <begin position="28"/>
        <end position="342"/>
    </location>
</feature>
<feature type="region of interest" description="G1 motif" evidence="3">
    <location>
        <begin position="31"/>
        <end position="44"/>
    </location>
</feature>
<feature type="region of interest" description="G2 motif" evidence="3">
    <location>
        <begin position="165"/>
        <end position="173"/>
    </location>
</feature>
<feature type="region of interest" description="G3 motif" evidence="3">
    <location>
        <begin position="188"/>
        <end position="197"/>
    </location>
</feature>
<feature type="region of interest" description="G4 motif" evidence="3">
    <location>
        <begin position="257"/>
        <end position="264"/>
    </location>
</feature>
<feature type="region of interest" description="G5 motif" evidence="3">
    <location>
        <begin position="314"/>
        <end position="319"/>
    </location>
</feature>
<feature type="binding site" evidence="1">
    <location>
        <begin position="36"/>
        <end position="43"/>
    </location>
    <ligand>
        <name>GTP</name>
        <dbReference type="ChEBI" id="CHEBI:37565"/>
    </ligand>
</feature>
<feature type="binding site" evidence="1">
    <location>
        <position position="43"/>
    </location>
    <ligand>
        <name>Mg(2+)</name>
        <dbReference type="ChEBI" id="CHEBI:18420"/>
    </ligand>
</feature>
<feature type="binding site" evidence="1">
    <location>
        <begin position="167"/>
        <end position="173"/>
    </location>
    <ligand>
        <name>GTP</name>
        <dbReference type="ChEBI" id="CHEBI:37565"/>
    </ligand>
</feature>
<feature type="binding site" evidence="1">
    <location>
        <position position="173"/>
    </location>
    <ligand>
        <name>Mg(2+)</name>
        <dbReference type="ChEBI" id="CHEBI:18420"/>
    </ligand>
</feature>
<feature type="binding site" evidence="1">
    <location>
        <begin position="192"/>
        <end position="196"/>
    </location>
    <ligand>
        <name>GTP</name>
        <dbReference type="ChEBI" id="CHEBI:37565"/>
    </ligand>
</feature>
<feature type="binding site" evidence="1">
    <location>
        <begin position="261"/>
        <end position="264"/>
    </location>
    <ligand>
        <name>GTP</name>
        <dbReference type="ChEBI" id="CHEBI:37565"/>
    </ligand>
</feature>
<feature type="binding site" evidence="1">
    <location>
        <position position="316"/>
    </location>
    <ligand>
        <name>GTP</name>
        <dbReference type="ChEBI" id="CHEBI:37565"/>
    </ligand>
</feature>
<feature type="lipid moiety-binding region" description="N-myristoyl glycine" evidence="2">
    <location>
        <position position="2"/>
    </location>
</feature>
<feature type="lipid moiety-binding region" description="S-palmitoyl cysteine" evidence="2">
    <location>
        <position position="3"/>
    </location>
</feature>
<keyword id="KW-0342">GTP-binding</keyword>
<keyword id="KW-0449">Lipoprotein</keyword>
<keyword id="KW-0460">Magnesium</keyword>
<keyword id="KW-0479">Metal-binding</keyword>
<keyword id="KW-0519">Myristate</keyword>
<keyword id="KW-0547">Nucleotide-binding</keyword>
<keyword id="KW-0564">Palmitate</keyword>
<keyword id="KW-1185">Reference proteome</keyword>
<keyword id="KW-0807">Transducer</keyword>
<name>GPA9_DICDI</name>
<sequence>MGCNSSSEAKQSDKIDRTLYDEKKSQEREIKLLLLGSGDSGKSTIAKQMRYIHTKGFSNEEIATFVEIMHSNVLSSIQILIRNVPVEQLGSDLKDKANYYSSINPYELPLTPDIGLEIDRLWKNEAIQKLFSTNRAELNLPEVTAYCLDQVERISSETYTPTQEDVLRCRQRTTGMKETQFNVEDIKFRLIDVGGQKNERRKWMHYFEDVKSIIFCVALGDYDMNLVEDETINRMEDSLKLWNDIVNNPFFKNTSFVLFLNKNDIFREKIKKIPLVDYFPDYQGGYNYEKGIEYIRNKFFSSVPTATTIVAHVTTATDTENITIVFDAVRRNIIQSILKLHY</sequence>
<organism>
    <name type="scientific">Dictyostelium discoideum</name>
    <name type="common">Social amoeba</name>
    <dbReference type="NCBI Taxonomy" id="44689"/>
    <lineage>
        <taxon>Eukaryota</taxon>
        <taxon>Amoebozoa</taxon>
        <taxon>Evosea</taxon>
        <taxon>Eumycetozoa</taxon>
        <taxon>Dictyostelia</taxon>
        <taxon>Dictyosteliales</taxon>
        <taxon>Dictyosteliaceae</taxon>
        <taxon>Dictyostelium</taxon>
    </lineage>
</organism>
<dbReference type="EMBL" id="AAFI02000055">
    <property type="protein sequence ID" value="EAL65694.1"/>
    <property type="molecule type" value="Genomic_DNA"/>
</dbReference>
<dbReference type="RefSeq" id="XP_639050.1">
    <property type="nucleotide sequence ID" value="XM_633958.1"/>
</dbReference>
<dbReference type="SMR" id="Q54R41"/>
<dbReference type="FunCoup" id="Q54R41">
    <property type="interactions" value="7"/>
</dbReference>
<dbReference type="STRING" id="44689.Q54R41"/>
<dbReference type="PaxDb" id="44689-DDB0230128"/>
<dbReference type="EnsemblProtists" id="EAL65694">
    <property type="protein sequence ID" value="EAL65694"/>
    <property type="gene ID" value="DDB_G0283419"/>
</dbReference>
<dbReference type="GeneID" id="8624075"/>
<dbReference type="KEGG" id="ddi:DDB_G0283419"/>
<dbReference type="dictyBase" id="DDB_G0283419">
    <property type="gene designation" value="gpaI"/>
</dbReference>
<dbReference type="VEuPathDB" id="AmoebaDB:DDB_G0283419"/>
<dbReference type="eggNOG" id="KOG0082">
    <property type="taxonomic scope" value="Eukaryota"/>
</dbReference>
<dbReference type="HOGENOM" id="CLU_014184_6_0_1"/>
<dbReference type="InParanoid" id="Q54R41"/>
<dbReference type="OMA" id="QMRYIHT"/>
<dbReference type="PhylomeDB" id="Q54R41"/>
<dbReference type="Reactome" id="R-DDI-170670">
    <property type="pathway name" value="Adenylate cyclase inhibitory pathway"/>
</dbReference>
<dbReference type="Reactome" id="R-DDI-2514859">
    <property type="pathway name" value="Inactivation, recovery and regulation of the phototransduction cascade"/>
</dbReference>
<dbReference type="Reactome" id="R-DDI-418594">
    <property type="pathway name" value="G alpha (i) signalling events"/>
</dbReference>
<dbReference type="Reactome" id="R-DDI-418597">
    <property type="pathway name" value="G alpha (z) signalling events"/>
</dbReference>
<dbReference type="PRO" id="PR:Q54R41"/>
<dbReference type="Proteomes" id="UP000002195">
    <property type="component" value="Chromosome 4"/>
</dbReference>
<dbReference type="GO" id="GO:0005737">
    <property type="term" value="C:cytoplasm"/>
    <property type="evidence" value="ECO:0000318"/>
    <property type="project" value="GO_Central"/>
</dbReference>
<dbReference type="GO" id="GO:0005834">
    <property type="term" value="C:heterotrimeric G-protein complex"/>
    <property type="evidence" value="ECO:0000318"/>
    <property type="project" value="GO_Central"/>
</dbReference>
<dbReference type="GO" id="GO:0005886">
    <property type="term" value="C:plasma membrane"/>
    <property type="evidence" value="ECO:0000314"/>
    <property type="project" value="dictyBase"/>
</dbReference>
<dbReference type="GO" id="GO:0001664">
    <property type="term" value="F:G protein-coupled receptor binding"/>
    <property type="evidence" value="ECO:0000318"/>
    <property type="project" value="GO_Central"/>
</dbReference>
<dbReference type="GO" id="GO:0031683">
    <property type="term" value="F:G-protein beta/gamma-subunit complex binding"/>
    <property type="evidence" value="ECO:0000318"/>
    <property type="project" value="GO_Central"/>
</dbReference>
<dbReference type="GO" id="GO:0005525">
    <property type="term" value="F:GTP binding"/>
    <property type="evidence" value="ECO:0007669"/>
    <property type="project" value="UniProtKB-KW"/>
</dbReference>
<dbReference type="GO" id="GO:0003924">
    <property type="term" value="F:GTPase activity"/>
    <property type="evidence" value="ECO:0000318"/>
    <property type="project" value="GO_Central"/>
</dbReference>
<dbReference type="GO" id="GO:0046872">
    <property type="term" value="F:metal ion binding"/>
    <property type="evidence" value="ECO:0007669"/>
    <property type="project" value="UniProtKB-KW"/>
</dbReference>
<dbReference type="GO" id="GO:0007193">
    <property type="term" value="P:adenylate cyclase-inhibiting G protein-coupled receptor signaling pathway"/>
    <property type="evidence" value="ECO:0000314"/>
    <property type="project" value="dictyBase"/>
</dbReference>
<dbReference type="GO" id="GO:0007188">
    <property type="term" value="P:adenylate cyclase-modulating G protein-coupled receptor signaling pathway"/>
    <property type="evidence" value="ECO:0000318"/>
    <property type="project" value="GO_Central"/>
</dbReference>
<dbReference type="GO" id="GO:0106072">
    <property type="term" value="P:negative regulation of adenylate cyclase-activating G protein-coupled receptor signaling pathway"/>
    <property type="evidence" value="ECO:0000315"/>
    <property type="project" value="dictyBase"/>
</dbReference>
<dbReference type="GO" id="GO:1903665">
    <property type="term" value="P:negative regulation of asexual reproduction"/>
    <property type="evidence" value="ECO:0000315"/>
    <property type="project" value="dictyBase"/>
</dbReference>
<dbReference type="GO" id="GO:0030308">
    <property type="term" value="P:negative regulation of cell growth"/>
    <property type="evidence" value="ECO:0000315"/>
    <property type="project" value="dictyBase"/>
</dbReference>
<dbReference type="GO" id="GO:0010754">
    <property type="term" value="P:negative regulation of cGMP-mediated signaling"/>
    <property type="evidence" value="ECO:0000315"/>
    <property type="project" value="dictyBase"/>
</dbReference>
<dbReference type="GO" id="GO:0051093">
    <property type="term" value="P:negative regulation of developmental process"/>
    <property type="evidence" value="ECO:0000304"/>
    <property type="project" value="dictyBase"/>
</dbReference>
<dbReference type="GO" id="GO:0045744">
    <property type="term" value="P:negative regulation of G protein-coupled receptor signaling pathway"/>
    <property type="evidence" value="ECO:0000315"/>
    <property type="project" value="dictyBase"/>
</dbReference>
<dbReference type="GO" id="GO:0051898">
    <property type="term" value="P:negative regulation of phosphatidylinositol 3-kinase/protein kinase B signal transduction"/>
    <property type="evidence" value="ECO:0000315"/>
    <property type="project" value="dictyBase"/>
</dbReference>
<dbReference type="GO" id="GO:0061123">
    <property type="term" value="P:negative regulation of positive chemotaxis to cAMP"/>
    <property type="evidence" value="ECO:0000315"/>
    <property type="project" value="dictyBase"/>
</dbReference>
<dbReference type="GO" id="GO:1903077">
    <property type="term" value="P:negative regulation of protein localization to plasma membrane"/>
    <property type="evidence" value="ECO:0000315"/>
    <property type="project" value="dictyBase"/>
</dbReference>
<dbReference type="GO" id="GO:0031157">
    <property type="term" value="P:regulation of aggregate size involved in sorocarp development"/>
    <property type="evidence" value="ECO:0000315"/>
    <property type="project" value="dictyBase"/>
</dbReference>
<dbReference type="CDD" id="cd00066">
    <property type="entry name" value="G-alpha"/>
    <property type="match status" value="1"/>
</dbReference>
<dbReference type="FunFam" id="3.40.50.300:FF:000563">
    <property type="entry name" value="Guanine nucleotide-binding protein alpha subunit"/>
    <property type="match status" value="1"/>
</dbReference>
<dbReference type="FunFam" id="1.10.400.10:FF:000028">
    <property type="entry name" value="Guanine nucleotide-binding protein alpha-5 subunit"/>
    <property type="match status" value="1"/>
</dbReference>
<dbReference type="Gene3D" id="1.10.400.10">
    <property type="entry name" value="GI Alpha 1, domain 2-like"/>
    <property type="match status" value="1"/>
</dbReference>
<dbReference type="Gene3D" id="3.40.50.300">
    <property type="entry name" value="P-loop containing nucleotide triphosphate hydrolases"/>
    <property type="match status" value="1"/>
</dbReference>
<dbReference type="InterPro" id="IPR001019">
    <property type="entry name" value="Gprotein_alpha_su"/>
</dbReference>
<dbReference type="InterPro" id="IPR011025">
    <property type="entry name" value="GproteinA_insert"/>
</dbReference>
<dbReference type="InterPro" id="IPR027417">
    <property type="entry name" value="P-loop_NTPase"/>
</dbReference>
<dbReference type="PANTHER" id="PTHR10218:SF362">
    <property type="entry name" value="G PROTEIN ALPHA O SUBUNIT"/>
    <property type="match status" value="1"/>
</dbReference>
<dbReference type="PANTHER" id="PTHR10218">
    <property type="entry name" value="GTP-BINDING PROTEIN ALPHA SUBUNIT"/>
    <property type="match status" value="1"/>
</dbReference>
<dbReference type="Pfam" id="PF00503">
    <property type="entry name" value="G-alpha"/>
    <property type="match status" value="1"/>
</dbReference>
<dbReference type="PRINTS" id="PR00318">
    <property type="entry name" value="GPROTEINA"/>
</dbReference>
<dbReference type="SMART" id="SM00275">
    <property type="entry name" value="G_alpha"/>
    <property type="match status" value="1"/>
</dbReference>
<dbReference type="SUPFAM" id="SSF52540">
    <property type="entry name" value="P-loop containing nucleoside triphosphate hydrolases"/>
    <property type="match status" value="1"/>
</dbReference>
<dbReference type="SUPFAM" id="SSF47895">
    <property type="entry name" value="Transducin (alpha subunit), insertion domain"/>
    <property type="match status" value="1"/>
</dbReference>
<dbReference type="PROSITE" id="PS51882">
    <property type="entry name" value="G_ALPHA"/>
    <property type="match status" value="1"/>
</dbReference>
<accession>Q54R41</accession>
<comment type="function">
    <text evidence="4 5">Guanine nucleotide-binding proteins (G proteins) are involved as modulators or transducers in various transmembrane signaling systems. G alpha-9 antagonizes broad chemotactic response. It functions rapidly following receptor stimulation to negatively regulate PI3K/PTEN, adenylyl cyclase, and guanylyl cyclase pathways.</text>
</comment>
<comment type="subunit">
    <text>G proteins are composed of 3 units; alpha, beta and gamma. The alpha chain contains the guanine nucleotide binding site.</text>
</comment>
<comment type="developmental stage">
    <text>Expressed primarily at the mound stage.</text>
</comment>
<comment type="similarity">
    <text evidence="6">Belongs to the G-alpha family.</text>
</comment>
<protein>
    <recommendedName>
        <fullName>Guanine nucleotide-binding protein alpha-9 subunit</fullName>
        <shortName>G alpha-9</shortName>
    </recommendedName>
</protein>
<reference key="1">
    <citation type="journal article" date="2005" name="Nature">
        <title>The genome of the social amoeba Dictyostelium discoideum.</title>
        <authorList>
            <person name="Eichinger L."/>
            <person name="Pachebat J.A."/>
            <person name="Gloeckner G."/>
            <person name="Rajandream M.A."/>
            <person name="Sucgang R."/>
            <person name="Berriman M."/>
            <person name="Song J."/>
            <person name="Olsen R."/>
            <person name="Szafranski K."/>
            <person name="Xu Q."/>
            <person name="Tunggal B."/>
            <person name="Kummerfeld S."/>
            <person name="Madera M."/>
            <person name="Konfortov B.A."/>
            <person name="Rivero F."/>
            <person name="Bankier A.T."/>
            <person name="Lehmann R."/>
            <person name="Hamlin N."/>
            <person name="Davies R."/>
            <person name="Gaudet P."/>
            <person name="Fey P."/>
            <person name="Pilcher K."/>
            <person name="Chen G."/>
            <person name="Saunders D."/>
            <person name="Sodergren E.J."/>
            <person name="Davis P."/>
            <person name="Kerhornou A."/>
            <person name="Nie X."/>
            <person name="Hall N."/>
            <person name="Anjard C."/>
            <person name="Hemphill L."/>
            <person name="Bason N."/>
            <person name="Farbrother P."/>
            <person name="Desany B."/>
            <person name="Just E."/>
            <person name="Morio T."/>
            <person name="Rost R."/>
            <person name="Churcher C.M."/>
            <person name="Cooper J."/>
            <person name="Haydock S."/>
            <person name="van Driessche N."/>
            <person name="Cronin A."/>
            <person name="Goodhead I."/>
            <person name="Muzny D.M."/>
            <person name="Mourier T."/>
            <person name="Pain A."/>
            <person name="Lu M."/>
            <person name="Harper D."/>
            <person name="Lindsay R."/>
            <person name="Hauser H."/>
            <person name="James K.D."/>
            <person name="Quiles M."/>
            <person name="Madan Babu M."/>
            <person name="Saito T."/>
            <person name="Buchrieser C."/>
            <person name="Wardroper A."/>
            <person name="Felder M."/>
            <person name="Thangavelu M."/>
            <person name="Johnson D."/>
            <person name="Knights A."/>
            <person name="Loulseged H."/>
            <person name="Mungall K.L."/>
            <person name="Oliver K."/>
            <person name="Price C."/>
            <person name="Quail M.A."/>
            <person name="Urushihara H."/>
            <person name="Hernandez J."/>
            <person name="Rabbinowitsch E."/>
            <person name="Steffen D."/>
            <person name="Sanders M."/>
            <person name="Ma J."/>
            <person name="Kohara Y."/>
            <person name="Sharp S."/>
            <person name="Simmonds M.N."/>
            <person name="Spiegler S."/>
            <person name="Tivey A."/>
            <person name="Sugano S."/>
            <person name="White B."/>
            <person name="Walker D."/>
            <person name="Woodward J.R."/>
            <person name="Winckler T."/>
            <person name="Tanaka Y."/>
            <person name="Shaulsky G."/>
            <person name="Schleicher M."/>
            <person name="Weinstock G.M."/>
            <person name="Rosenthal A."/>
            <person name="Cox E.C."/>
            <person name="Chisholm R.L."/>
            <person name="Gibbs R.A."/>
            <person name="Loomis W.F."/>
            <person name="Platzer M."/>
            <person name="Kay R.R."/>
            <person name="Williams J.G."/>
            <person name="Dear P.H."/>
            <person name="Noegel A.A."/>
            <person name="Barrell B.G."/>
            <person name="Kuspa A."/>
        </authorList>
    </citation>
    <scope>NUCLEOTIDE SEQUENCE [LARGE SCALE GENOMIC DNA]</scope>
    <source>
        <strain>AX4</strain>
    </source>
</reference>
<reference key="2">
    <citation type="journal article" date="2002" name="Curr. Biol.">
        <title>Galpha-mediated inhibition of developmental signal response.</title>
        <authorList>
            <person name="Brzostowski J.A."/>
            <person name="Johnson C."/>
            <person name="Kimmel A.R."/>
        </authorList>
    </citation>
    <scope>IDENTIFICATION</scope>
    <scope>FUNCTION</scope>
</reference>
<reference key="3">
    <citation type="journal article" date="2004" name="Genes Dev.">
        <title>A G alpha-dependent pathway that antagonizes multiple chemoattractant responses that regulate directional cell movement.</title>
        <authorList>
            <person name="Brzostowski J.A."/>
            <person name="Parent C.A."/>
            <person name="Kimmel A.R."/>
        </authorList>
    </citation>
    <scope>FUNCTION</scope>
</reference>
<gene>
    <name type="primary">gpaI</name>
    <name type="synonym">gpa9</name>
    <name type="ORF">DDB_G0283419</name>
</gene>